<keyword id="KW-0998">Cell outer membrane</keyword>
<keyword id="KW-0134">Cell wall</keyword>
<keyword id="KW-0472">Membrane</keyword>
<keyword id="KW-0964">Secreted</keyword>
<keyword id="KW-0732">Signal</keyword>
<keyword id="KW-0812">Transmembrane</keyword>
<keyword id="KW-1134">Transmembrane beta strand</keyword>
<proteinExistence type="evidence at transcript level"/>
<accession>O86164</accession>
<accession>Q9K299</accession>
<dbReference type="EMBL" id="AJ001311">
    <property type="protein sequence ID" value="CAA04672.1"/>
    <property type="molecule type" value="Genomic_DNA"/>
</dbReference>
<dbReference type="EMBL" id="AJ133034">
    <property type="protein sequence ID" value="CAB37072.1"/>
    <property type="molecule type" value="Genomic_DNA"/>
</dbReference>
<dbReference type="EMBL" id="AE001363">
    <property type="protein sequence ID" value="AAD18593.1"/>
    <property type="molecule type" value="Genomic_DNA"/>
</dbReference>
<dbReference type="EMBL" id="AE002161">
    <property type="protein sequence ID" value="AAF38159.1"/>
    <property type="status" value="ALT_INIT"/>
    <property type="molecule type" value="Genomic_DNA"/>
</dbReference>
<dbReference type="EMBL" id="BA000008">
    <property type="protein sequence ID" value="BAA98658.1"/>
    <property type="molecule type" value="Genomic_DNA"/>
</dbReference>
<dbReference type="EMBL" id="AE009440">
    <property type="protein sequence ID" value="AAP98399.1"/>
    <property type="molecule type" value="Genomic_DNA"/>
</dbReference>
<dbReference type="PIR" id="D72077">
    <property type="entry name" value="D72077"/>
</dbReference>
<dbReference type="PIR" id="F81591">
    <property type="entry name" value="F81591"/>
</dbReference>
<dbReference type="PIR" id="H86546">
    <property type="entry name" value="H86546"/>
</dbReference>
<dbReference type="RefSeq" id="NP_224649.1">
    <property type="nucleotide sequence ID" value="NC_000922.1"/>
</dbReference>
<dbReference type="RefSeq" id="WP_010883092.1">
    <property type="nucleotide sequence ID" value="NZ_LN847257.1"/>
</dbReference>
<dbReference type="STRING" id="406984.CPK_ORF00965"/>
<dbReference type="GeneID" id="45050497"/>
<dbReference type="KEGG" id="cpa:CP_0302"/>
<dbReference type="KEGG" id="cpj:pmp_11"/>
<dbReference type="KEGG" id="cpn:CPn_0451"/>
<dbReference type="KEGG" id="cpt:CpB0468"/>
<dbReference type="PATRIC" id="fig|115713.3.peg.501"/>
<dbReference type="eggNOG" id="COG3210">
    <property type="taxonomic scope" value="Bacteria"/>
</dbReference>
<dbReference type="HOGENOM" id="CLU_004549_1_1_0"/>
<dbReference type="OrthoDB" id="16646at2"/>
<dbReference type="Proteomes" id="UP000000583">
    <property type="component" value="Chromosome"/>
</dbReference>
<dbReference type="Proteomes" id="UP000000801">
    <property type="component" value="Chromosome"/>
</dbReference>
<dbReference type="GO" id="GO:0009279">
    <property type="term" value="C:cell outer membrane"/>
    <property type="evidence" value="ECO:0007669"/>
    <property type="project" value="UniProtKB-SubCell"/>
</dbReference>
<dbReference type="GO" id="GO:0005576">
    <property type="term" value="C:extracellular region"/>
    <property type="evidence" value="ECO:0007669"/>
    <property type="project" value="UniProtKB-KW"/>
</dbReference>
<dbReference type="Gene3D" id="2.40.128.130">
    <property type="entry name" value="Autotransporter beta-domain"/>
    <property type="match status" value="1"/>
</dbReference>
<dbReference type="InterPro" id="IPR005546">
    <property type="entry name" value="Autotransporte_beta"/>
</dbReference>
<dbReference type="InterPro" id="IPR036709">
    <property type="entry name" value="Autotransporte_beta_dom_sf"/>
</dbReference>
<dbReference type="InterPro" id="IPR011427">
    <property type="entry name" value="Polymorphic_membr_middle"/>
</dbReference>
<dbReference type="InterPro" id="IPR003368">
    <property type="entry name" value="POMP_repeat"/>
</dbReference>
<dbReference type="NCBIfam" id="TIGR01376">
    <property type="entry name" value="POMP_repeat"/>
    <property type="match status" value="2"/>
</dbReference>
<dbReference type="Pfam" id="PF02415">
    <property type="entry name" value="Chlam_PMP"/>
    <property type="match status" value="2"/>
</dbReference>
<dbReference type="Pfam" id="PF07548">
    <property type="entry name" value="ChlamPMP_M"/>
    <property type="match status" value="1"/>
</dbReference>
<dbReference type="SMART" id="SM00869">
    <property type="entry name" value="Autotransporter"/>
    <property type="match status" value="1"/>
</dbReference>
<dbReference type="SUPFAM" id="SSF103515">
    <property type="entry name" value="Autotransporter"/>
    <property type="match status" value="1"/>
</dbReference>
<dbReference type="PROSITE" id="PS51208">
    <property type="entry name" value="AUTOTRANSPORTER"/>
    <property type="match status" value="1"/>
</dbReference>
<comment type="subcellular location">
    <subcellularLocation>
        <location>Secreted</location>
        <location>Cell wall</location>
    </subcellularLocation>
    <subcellularLocation>
        <location evidence="3">Cell outer membrane</location>
        <topology evidence="3">Peripheral membrane protein</topology>
        <orientation evidence="3">Extracellular side</orientation>
    </subcellularLocation>
</comment>
<comment type="developmental stage">
    <text>Elementary body.</text>
</comment>
<comment type="similarity">
    <text evidence="3">Belongs to the PMP outer membrane protein family.</text>
</comment>
<comment type="sequence caution" evidence="3">
    <conflict type="erroneous initiation">
        <sequence resource="EMBL-CDS" id="AAF38159"/>
    </conflict>
</comment>
<protein>
    <recommendedName>
        <fullName>Probable outer membrane protein pmp11</fullName>
    </recommendedName>
    <alternativeName>
        <fullName>Outer membrane protein 4</fullName>
    </alternativeName>
    <alternativeName>
        <fullName>Polymorphic membrane protein 11</fullName>
    </alternativeName>
</protein>
<feature type="signal peptide" evidence="1">
    <location>
        <begin position="1"/>
        <end position="24"/>
    </location>
</feature>
<feature type="chain" id="PRO_0000024741" description="Probable outer membrane protein pmp11">
    <location>
        <begin position="25"/>
        <end position="928"/>
    </location>
</feature>
<feature type="domain" description="Autotransporter" evidence="2">
    <location>
        <begin position="627"/>
        <end position="928"/>
    </location>
</feature>
<gene>
    <name type="primary">pmp11</name>
    <name type="synonym">omp4</name>
    <name type="ordered locus">CPn_0449</name>
    <name type="ordered locus">CP_0302</name>
    <name type="ordered locus">CpB0468</name>
</gene>
<sequence>MKTSIPWVLVSSVLAFSCHLQSLANEELLSPDDSFNGNIDSGTFTPKTSATTYSLTGDVFFYEPGKGTPLSDSCFKQTTDNLTFLGNGHSLTFGFIDAGTHAGAAASTTANKNLTFSGFSLLSFDSSPSTTVTTGQGTLSSAGGVNLENIRKLVVAGNFSTADGGAIKGASFLLTGTSGDALFSNNSSSTKGGAIATTAGARIANNTGYVRFLSNIASTSGGAIDDEGTSILSNNKFLYFEGNAAKTTGGAICNTKASGSPELIISNNKTLIFASNVAETSGGAIHAKKLALSSGGFTEFLRNNVSSATPKGGAISIDASGELSLSAETGNITFVRNTLTTTGSTDTPKRNAINIGSNGKFTELRAAKNHTIFFYDPITSEGTSSDVLKINNGSAGALNPYQGTILFSGETLTADELKVADNLKSSFTQPVSLSGGKLLLQKGVTLESTSFSQEAGSLLGMDSGTTLSTTAGSITITNLGINVDSLGLKQPVSLTAKGASNKVIVSGKLNLIDIEGNIYESHMFSHDQLFSLLKITVDADVDTNVDISSLIPVPAEDPNSEYGFQGQWNVNWTTDTATNTKEATATWTKTGFVPSPERKSALVCNTLWGVFTDIRSLQQLVEIGATGMEHKQGFWVSSMTNFLHKTGDENRKGFRHTSGGYVIGGSAHTPKDDLFTFAFCHLFARDKDCFIAHNNSRTYGGTLFFKHSHTLQPQNYLRLGRAKFSESAIEKFPREIPLALDVQVSFSHSDNRMETHYTSLPESEGSWSNECIAGGIGLDLPFVLSNPHPLFKTFIPQMKVEMVYVSQNSFFESSSDGRGFSIGRLLNLSIPVGAKFVQGDIGDSYTYDLSGFFVSDVYRNNPQSTATLVMSPDSWKIRGGNLSRQAFLLRGSNNYVYNSNCELFGHYAMELRGSSRNYNVDVGTKLRF</sequence>
<name>PMP11_CHLPN</name>
<reference key="1">
    <citation type="journal article" date="1999" name="Infect. Immun.">
        <title>Identification of two novel genes encoding 97- to 99-kilodalton outer membrane proteins of Chlamydia pneumoniae.</title>
        <authorList>
            <person name="Knudsen K."/>
            <person name="Madsen A.S."/>
            <person name="Mygind P."/>
            <person name="Christiansen G."/>
            <person name="Birkelund S."/>
        </authorList>
    </citation>
    <scope>NUCLEOTIDE SEQUENCE [GENOMIC DNA]</scope>
    <source>
        <strain>CWL029/VR-1310</strain>
    </source>
</reference>
<reference key="2">
    <citation type="journal article" date="1999" name="Am. Heart J.">
        <title>Molecular biology of Chlamydia pneumoniae surface proteins and their role in immunopathogenicity.</title>
        <authorList>
            <person name="Christiansen G."/>
            <person name="Boesen T."/>
            <person name="Hjerno K."/>
            <person name="Daugaard L."/>
            <person name="Mygind P."/>
            <person name="Madsen A.S."/>
            <person name="Knudsen K."/>
            <person name="Falk E."/>
            <person name="Birkelund S."/>
        </authorList>
    </citation>
    <scope>NUCLEOTIDE SEQUENCE [GENOMIC DNA]</scope>
    <source>
        <strain>CWL029 / VR1310</strain>
    </source>
</reference>
<reference key="3">
    <citation type="journal article" date="1999" name="Nat. Genet.">
        <title>Comparative genomes of Chlamydia pneumoniae and C. trachomatis.</title>
        <authorList>
            <person name="Kalman S."/>
            <person name="Mitchell W.P."/>
            <person name="Marathe R."/>
            <person name="Lammel C.J."/>
            <person name="Fan J."/>
            <person name="Hyman R.W."/>
            <person name="Olinger L."/>
            <person name="Grimwood J."/>
            <person name="Davis R.W."/>
            <person name="Stephens R.S."/>
        </authorList>
    </citation>
    <scope>NUCLEOTIDE SEQUENCE [LARGE SCALE GENOMIC DNA]</scope>
    <source>
        <strain>CWL029</strain>
    </source>
</reference>
<reference key="4">
    <citation type="journal article" date="2000" name="Nucleic Acids Res.">
        <title>Genome sequences of Chlamydia trachomatis MoPn and Chlamydia pneumoniae AR39.</title>
        <authorList>
            <person name="Read T.D."/>
            <person name="Brunham R.C."/>
            <person name="Shen C."/>
            <person name="Gill S.R."/>
            <person name="Heidelberg J.F."/>
            <person name="White O."/>
            <person name="Hickey E.K."/>
            <person name="Peterson J.D."/>
            <person name="Utterback T.R."/>
            <person name="Berry K.J."/>
            <person name="Bass S."/>
            <person name="Linher K.D."/>
            <person name="Weidman J.F."/>
            <person name="Khouri H.M."/>
            <person name="Craven B."/>
            <person name="Bowman C."/>
            <person name="Dodson R.J."/>
            <person name="Gwinn M.L."/>
            <person name="Nelson W.C."/>
            <person name="DeBoy R.T."/>
            <person name="Kolonay J.F."/>
            <person name="McClarty G."/>
            <person name="Salzberg S.L."/>
            <person name="Eisen J.A."/>
            <person name="Fraser C.M."/>
        </authorList>
    </citation>
    <scope>NUCLEOTIDE SEQUENCE [LARGE SCALE GENOMIC DNA]</scope>
    <source>
        <strain>AR39</strain>
    </source>
</reference>
<reference key="5">
    <citation type="journal article" date="2000" name="Nucleic Acids Res.">
        <title>Comparison of whole genome sequences of Chlamydia pneumoniae J138 from Japan and CWL029 from USA.</title>
        <authorList>
            <person name="Shirai M."/>
            <person name="Hirakawa H."/>
            <person name="Kimoto M."/>
            <person name="Tabuchi M."/>
            <person name="Kishi F."/>
            <person name="Ouchi K."/>
            <person name="Shiba T."/>
            <person name="Ishii K."/>
            <person name="Hattori M."/>
            <person name="Kuhara S."/>
            <person name="Nakazawa T."/>
        </authorList>
    </citation>
    <scope>NUCLEOTIDE SEQUENCE [LARGE SCALE GENOMIC DNA]</scope>
    <source>
        <strain>J138</strain>
    </source>
</reference>
<reference key="6">
    <citation type="submission" date="2002-05" db="EMBL/GenBank/DDBJ databases">
        <title>The genome sequence of Chlamydia pneumoniae TW183 and comparison with other Chlamydia strains based on whole genome sequence analysis.</title>
        <authorList>
            <person name="Geng M.M."/>
            <person name="Schuhmacher A."/>
            <person name="Muehldorfer I."/>
            <person name="Bensch K.W."/>
            <person name="Schaefer K.P."/>
            <person name="Schneider S."/>
            <person name="Pohl T."/>
            <person name="Essig A."/>
            <person name="Marre R."/>
            <person name="Melchers K."/>
        </authorList>
    </citation>
    <scope>NUCLEOTIDE SEQUENCE [LARGE SCALE GENOMIC DNA]</scope>
    <source>
        <strain>TW-183</strain>
    </source>
</reference>
<organism>
    <name type="scientific">Chlamydia pneumoniae</name>
    <name type="common">Chlamydophila pneumoniae</name>
    <dbReference type="NCBI Taxonomy" id="83558"/>
    <lineage>
        <taxon>Bacteria</taxon>
        <taxon>Pseudomonadati</taxon>
        <taxon>Chlamydiota</taxon>
        <taxon>Chlamydiia</taxon>
        <taxon>Chlamydiales</taxon>
        <taxon>Chlamydiaceae</taxon>
        <taxon>Chlamydia/Chlamydophila group</taxon>
        <taxon>Chlamydia</taxon>
    </lineage>
</organism>
<evidence type="ECO:0000255" key="1"/>
<evidence type="ECO:0000255" key="2">
    <source>
        <dbReference type="PROSITE-ProRule" id="PRU00556"/>
    </source>
</evidence>
<evidence type="ECO:0000305" key="3"/>